<accession>Q6PDH4</accession>
<accession>Q3V1J9</accession>
<reference key="1">
    <citation type="journal article" date="2005" name="Science">
        <title>The transcriptional landscape of the mammalian genome.</title>
        <authorList>
            <person name="Carninci P."/>
            <person name="Kasukawa T."/>
            <person name="Katayama S."/>
            <person name="Gough J."/>
            <person name="Frith M.C."/>
            <person name="Maeda N."/>
            <person name="Oyama R."/>
            <person name="Ravasi T."/>
            <person name="Lenhard B."/>
            <person name="Wells C."/>
            <person name="Kodzius R."/>
            <person name="Shimokawa K."/>
            <person name="Bajic V.B."/>
            <person name="Brenner S.E."/>
            <person name="Batalov S."/>
            <person name="Forrest A.R."/>
            <person name="Zavolan M."/>
            <person name="Davis M.J."/>
            <person name="Wilming L.G."/>
            <person name="Aidinis V."/>
            <person name="Allen J.E."/>
            <person name="Ambesi-Impiombato A."/>
            <person name="Apweiler R."/>
            <person name="Aturaliya R.N."/>
            <person name="Bailey T.L."/>
            <person name="Bansal M."/>
            <person name="Baxter L."/>
            <person name="Beisel K.W."/>
            <person name="Bersano T."/>
            <person name="Bono H."/>
            <person name="Chalk A.M."/>
            <person name="Chiu K.P."/>
            <person name="Choudhary V."/>
            <person name="Christoffels A."/>
            <person name="Clutterbuck D.R."/>
            <person name="Crowe M.L."/>
            <person name="Dalla E."/>
            <person name="Dalrymple B.P."/>
            <person name="de Bono B."/>
            <person name="Della Gatta G."/>
            <person name="di Bernardo D."/>
            <person name="Down T."/>
            <person name="Engstrom P."/>
            <person name="Fagiolini M."/>
            <person name="Faulkner G."/>
            <person name="Fletcher C.F."/>
            <person name="Fukushima T."/>
            <person name="Furuno M."/>
            <person name="Futaki S."/>
            <person name="Gariboldi M."/>
            <person name="Georgii-Hemming P."/>
            <person name="Gingeras T.R."/>
            <person name="Gojobori T."/>
            <person name="Green R.E."/>
            <person name="Gustincich S."/>
            <person name="Harbers M."/>
            <person name="Hayashi Y."/>
            <person name="Hensch T.K."/>
            <person name="Hirokawa N."/>
            <person name="Hill D."/>
            <person name="Huminiecki L."/>
            <person name="Iacono M."/>
            <person name="Ikeo K."/>
            <person name="Iwama A."/>
            <person name="Ishikawa T."/>
            <person name="Jakt M."/>
            <person name="Kanapin A."/>
            <person name="Katoh M."/>
            <person name="Kawasawa Y."/>
            <person name="Kelso J."/>
            <person name="Kitamura H."/>
            <person name="Kitano H."/>
            <person name="Kollias G."/>
            <person name="Krishnan S.P."/>
            <person name="Kruger A."/>
            <person name="Kummerfeld S.K."/>
            <person name="Kurochkin I.V."/>
            <person name="Lareau L.F."/>
            <person name="Lazarevic D."/>
            <person name="Lipovich L."/>
            <person name="Liu J."/>
            <person name="Liuni S."/>
            <person name="McWilliam S."/>
            <person name="Madan Babu M."/>
            <person name="Madera M."/>
            <person name="Marchionni L."/>
            <person name="Matsuda H."/>
            <person name="Matsuzawa S."/>
            <person name="Miki H."/>
            <person name="Mignone F."/>
            <person name="Miyake S."/>
            <person name="Morris K."/>
            <person name="Mottagui-Tabar S."/>
            <person name="Mulder N."/>
            <person name="Nakano N."/>
            <person name="Nakauchi H."/>
            <person name="Ng P."/>
            <person name="Nilsson R."/>
            <person name="Nishiguchi S."/>
            <person name="Nishikawa S."/>
            <person name="Nori F."/>
            <person name="Ohara O."/>
            <person name="Okazaki Y."/>
            <person name="Orlando V."/>
            <person name="Pang K.C."/>
            <person name="Pavan W.J."/>
            <person name="Pavesi G."/>
            <person name="Pesole G."/>
            <person name="Petrovsky N."/>
            <person name="Piazza S."/>
            <person name="Reed J."/>
            <person name="Reid J.F."/>
            <person name="Ring B.Z."/>
            <person name="Ringwald M."/>
            <person name="Rost B."/>
            <person name="Ruan Y."/>
            <person name="Salzberg S.L."/>
            <person name="Sandelin A."/>
            <person name="Schneider C."/>
            <person name="Schoenbach C."/>
            <person name="Sekiguchi K."/>
            <person name="Semple C.A."/>
            <person name="Seno S."/>
            <person name="Sessa L."/>
            <person name="Sheng Y."/>
            <person name="Shibata Y."/>
            <person name="Shimada H."/>
            <person name="Shimada K."/>
            <person name="Silva D."/>
            <person name="Sinclair B."/>
            <person name="Sperling S."/>
            <person name="Stupka E."/>
            <person name="Sugiura K."/>
            <person name="Sultana R."/>
            <person name="Takenaka Y."/>
            <person name="Taki K."/>
            <person name="Tammoja K."/>
            <person name="Tan S.L."/>
            <person name="Tang S."/>
            <person name="Taylor M.S."/>
            <person name="Tegner J."/>
            <person name="Teichmann S.A."/>
            <person name="Ueda H.R."/>
            <person name="van Nimwegen E."/>
            <person name="Verardo R."/>
            <person name="Wei C.L."/>
            <person name="Yagi K."/>
            <person name="Yamanishi H."/>
            <person name="Zabarovsky E."/>
            <person name="Zhu S."/>
            <person name="Zimmer A."/>
            <person name="Hide W."/>
            <person name="Bult C."/>
            <person name="Grimmond S.M."/>
            <person name="Teasdale R.D."/>
            <person name="Liu E.T."/>
            <person name="Brusic V."/>
            <person name="Quackenbush J."/>
            <person name="Wahlestedt C."/>
            <person name="Mattick J.S."/>
            <person name="Hume D.A."/>
            <person name="Kai C."/>
            <person name="Sasaki D."/>
            <person name="Tomaru Y."/>
            <person name="Fukuda S."/>
            <person name="Kanamori-Katayama M."/>
            <person name="Suzuki M."/>
            <person name="Aoki J."/>
            <person name="Arakawa T."/>
            <person name="Iida J."/>
            <person name="Imamura K."/>
            <person name="Itoh M."/>
            <person name="Kato T."/>
            <person name="Kawaji H."/>
            <person name="Kawagashira N."/>
            <person name="Kawashima T."/>
            <person name="Kojima M."/>
            <person name="Kondo S."/>
            <person name="Konno H."/>
            <person name="Nakano K."/>
            <person name="Ninomiya N."/>
            <person name="Nishio T."/>
            <person name="Okada M."/>
            <person name="Plessy C."/>
            <person name="Shibata K."/>
            <person name="Shiraki T."/>
            <person name="Suzuki S."/>
            <person name="Tagami M."/>
            <person name="Waki K."/>
            <person name="Watahiki A."/>
            <person name="Okamura-Oho Y."/>
            <person name="Suzuki H."/>
            <person name="Kawai J."/>
            <person name="Hayashizaki Y."/>
        </authorList>
    </citation>
    <scope>NUCLEOTIDE SEQUENCE [LARGE SCALE MRNA] (ISOFORM 2)</scope>
    <source>
        <strain>C57BL/6J</strain>
        <tissue>Liver</tissue>
    </source>
</reference>
<reference key="2">
    <citation type="journal article" date="2004" name="Genome Res.">
        <title>The status, quality, and expansion of the NIH full-length cDNA project: the Mammalian Gene Collection (MGC).</title>
        <authorList>
            <consortium name="The MGC Project Team"/>
        </authorList>
    </citation>
    <scope>NUCLEOTIDE SEQUENCE [LARGE SCALE MRNA] (ISOFORM 1)</scope>
    <source>
        <strain>C57BL/6J</strain>
        <tissue>Brain</tissue>
    </source>
</reference>
<reference key="3">
    <citation type="journal article" date="2010" name="Cell">
        <title>A tissue-specific atlas of mouse protein phosphorylation and expression.</title>
        <authorList>
            <person name="Huttlin E.L."/>
            <person name="Jedrychowski M.P."/>
            <person name="Elias J.E."/>
            <person name="Goswami T."/>
            <person name="Rad R."/>
            <person name="Beausoleil S.A."/>
            <person name="Villen J."/>
            <person name="Haas W."/>
            <person name="Sowa M.E."/>
            <person name="Gygi S.P."/>
        </authorList>
    </citation>
    <scope>IDENTIFICATION BY MASS SPECTROMETRY [LARGE SCALE ANALYSIS]</scope>
    <source>
        <tissue>Kidney</tissue>
    </source>
</reference>
<reference key="4">
    <citation type="journal article" date="2015" name="Mol. Cell. Biol.">
        <title>Nuclear export of Smads by RanBP3L regulates bone morphogenetic protein signaling and mesenchymal stem cell differentiation.</title>
        <authorList>
            <person name="Chen F."/>
            <person name="Lin X."/>
            <person name="Xu P."/>
            <person name="Zhang Z."/>
            <person name="Chen Y."/>
            <person name="Wang C."/>
            <person name="Han J."/>
            <person name="Zhao B."/>
            <person name="Xiao M."/>
            <person name="Feng X.H."/>
        </authorList>
    </citation>
    <scope>INTERACTION WITH SMAD1</scope>
    <scope>SUBCELLULAR LOCATION</scope>
</reference>
<feature type="chain" id="PRO_0000312750" description="Ran-binding protein 3-like">
    <location>
        <begin position="1"/>
        <end position="491"/>
    </location>
</feature>
<feature type="domain" description="RanBD1" evidence="2">
    <location>
        <begin position="270"/>
        <end position="441"/>
    </location>
</feature>
<feature type="region of interest" description="Disordered" evidence="3">
    <location>
        <begin position="440"/>
        <end position="468"/>
    </location>
</feature>
<feature type="compositionally biased region" description="Polar residues" evidence="3">
    <location>
        <begin position="447"/>
        <end position="459"/>
    </location>
</feature>
<feature type="splice variant" id="VSP_029895" description="In isoform 2." evidence="5">
    <location>
        <begin position="90"/>
        <end position="446"/>
    </location>
</feature>
<feature type="splice variant" id="VSP_029896" description="In isoform 2." evidence="5">
    <location>
        <begin position="452"/>
        <end position="491"/>
    </location>
</feature>
<comment type="function">
    <text evidence="1 4">Nuclear export factor for BMP-specific SMAD1/5/8 that plays a critical role in terminating BMP signaling and regulating mesenchymal stem cell differentiation by blocking osteoblast differentiation to promote myogenic differention. Directly recognizes dephosphorylated SMAD1/5/8 and mediates their nuclear export in a Ran-dependent manner.</text>
</comment>
<comment type="subunit">
    <text evidence="1 4">Interacts with SMAD1, SMAD5 and SMAD8.</text>
</comment>
<comment type="subcellular location">
    <subcellularLocation>
        <location evidence="6">Nucleus</location>
    </subcellularLocation>
    <subcellularLocation>
        <location evidence="6">Cytoplasm</location>
    </subcellularLocation>
</comment>
<comment type="alternative products">
    <event type="alternative splicing"/>
    <isoform>
        <id>Q6PDH4-1</id>
        <name>1</name>
        <sequence type="displayed"/>
    </isoform>
    <isoform>
        <id>Q6PDH4-2</id>
        <name>2</name>
        <sequence type="described" ref="VSP_029895 VSP_029896"/>
    </isoform>
</comment>
<protein>
    <recommendedName>
        <fullName>Ran-binding protein 3-like</fullName>
    </recommendedName>
</protein>
<dbReference type="EMBL" id="AK132406">
    <property type="protein sequence ID" value="BAE21151.1"/>
    <property type="molecule type" value="mRNA"/>
</dbReference>
<dbReference type="EMBL" id="BC058706">
    <property type="protein sequence ID" value="AAH58706.1"/>
    <property type="molecule type" value="mRNA"/>
</dbReference>
<dbReference type="RefSeq" id="NP_932141.1">
    <molecule id="Q6PDH4-1"/>
    <property type="nucleotide sequence ID" value="NM_198024.2"/>
</dbReference>
<dbReference type="SMR" id="Q6PDH4"/>
<dbReference type="BioGRID" id="230141">
    <property type="interactions" value="1"/>
</dbReference>
<dbReference type="FunCoup" id="Q6PDH4">
    <property type="interactions" value="79"/>
</dbReference>
<dbReference type="STRING" id="10090.ENSMUSP00000055750"/>
<dbReference type="iPTMnet" id="Q6PDH4"/>
<dbReference type="PhosphoSitePlus" id="Q6PDH4"/>
<dbReference type="PaxDb" id="10090-ENSMUSP00000055750"/>
<dbReference type="ProteomicsDB" id="260986">
    <molecule id="Q6PDH4-1"/>
</dbReference>
<dbReference type="ProteomicsDB" id="260987">
    <molecule id="Q6PDH4-2"/>
</dbReference>
<dbReference type="Antibodypedia" id="43549">
    <property type="antibodies" value="85 antibodies from 18 providers"/>
</dbReference>
<dbReference type="DNASU" id="223332"/>
<dbReference type="Ensembl" id="ENSMUST00000227191.3">
    <molecule id="Q6PDH4-1"/>
    <property type="protein sequence ID" value="ENSMUSP00000154327.3"/>
    <property type="gene ID" value="ENSMUSG00000048424.19"/>
</dbReference>
<dbReference type="GeneID" id="223332"/>
<dbReference type="KEGG" id="mmu:223332"/>
<dbReference type="UCSC" id="uc033gsz.1">
    <molecule id="Q6PDH4-1"/>
    <property type="organism name" value="mouse"/>
</dbReference>
<dbReference type="AGR" id="MGI:2444654"/>
<dbReference type="CTD" id="202151"/>
<dbReference type="MGI" id="MGI:2444654">
    <property type="gene designation" value="Ranbp3l"/>
</dbReference>
<dbReference type="eggNOG" id="KOG0866">
    <property type="taxonomic scope" value="Eukaryota"/>
</dbReference>
<dbReference type="GeneTree" id="ENSGT00940000161387"/>
<dbReference type="HOGENOM" id="CLU_2385570_0_0_1"/>
<dbReference type="InParanoid" id="Q6PDH4"/>
<dbReference type="OMA" id="QMRFSSI"/>
<dbReference type="OrthoDB" id="185618at2759"/>
<dbReference type="PhylomeDB" id="Q6PDH4"/>
<dbReference type="BioGRID-ORCS" id="223332">
    <property type="hits" value="0 hits in 54 CRISPR screens"/>
</dbReference>
<dbReference type="ChiTaRS" id="Ranbp3l">
    <property type="organism name" value="mouse"/>
</dbReference>
<dbReference type="PRO" id="PR:Q6PDH4"/>
<dbReference type="Proteomes" id="UP000000589">
    <property type="component" value="Chromosome 15"/>
</dbReference>
<dbReference type="RNAct" id="Q6PDH4">
    <property type="molecule type" value="protein"/>
</dbReference>
<dbReference type="Bgee" id="ENSMUSG00000048424">
    <property type="expression patterns" value="Expressed in right kidney and 35 other cell types or tissues"/>
</dbReference>
<dbReference type="ExpressionAtlas" id="Q6PDH4">
    <property type="expression patterns" value="baseline and differential"/>
</dbReference>
<dbReference type="GO" id="GO:0005737">
    <property type="term" value="C:cytoplasm"/>
    <property type="evidence" value="ECO:0007669"/>
    <property type="project" value="UniProtKB-SubCell"/>
</dbReference>
<dbReference type="GO" id="GO:0005634">
    <property type="term" value="C:nucleus"/>
    <property type="evidence" value="ECO:0007669"/>
    <property type="project" value="UniProtKB-SubCell"/>
</dbReference>
<dbReference type="GO" id="GO:0046332">
    <property type="term" value="F:SMAD binding"/>
    <property type="evidence" value="ECO:0000353"/>
    <property type="project" value="UniProtKB"/>
</dbReference>
<dbReference type="GO" id="GO:0046907">
    <property type="term" value="P:intracellular transport"/>
    <property type="evidence" value="ECO:0007669"/>
    <property type="project" value="InterPro"/>
</dbReference>
<dbReference type="GO" id="GO:1901706">
    <property type="term" value="P:mesenchymal cell differentiation involved in bone development"/>
    <property type="evidence" value="ECO:0000315"/>
    <property type="project" value="UniProtKB"/>
</dbReference>
<dbReference type="GO" id="GO:0045668">
    <property type="term" value="P:negative regulation of osteoblast differentiation"/>
    <property type="evidence" value="ECO:0000315"/>
    <property type="project" value="UniProtKB"/>
</dbReference>
<dbReference type="GO" id="GO:0045663">
    <property type="term" value="P:positive regulation of myoblast differentiation"/>
    <property type="evidence" value="ECO:0000315"/>
    <property type="project" value="UniProtKB"/>
</dbReference>
<dbReference type="CDD" id="cd13180">
    <property type="entry name" value="RanBD_RanBP3"/>
    <property type="match status" value="1"/>
</dbReference>
<dbReference type="FunFam" id="2.30.29.30:FF:000228">
    <property type="entry name" value="ran-binding protein 3-like isoform X2"/>
    <property type="match status" value="1"/>
</dbReference>
<dbReference type="Gene3D" id="2.30.29.30">
    <property type="entry name" value="Pleckstrin-homology domain (PH domain)/Phosphotyrosine-binding domain (PTB)"/>
    <property type="match status" value="1"/>
</dbReference>
<dbReference type="InterPro" id="IPR011993">
    <property type="entry name" value="PH-like_dom_sf"/>
</dbReference>
<dbReference type="InterPro" id="IPR000156">
    <property type="entry name" value="Ran_bind_dom"/>
</dbReference>
<dbReference type="InterPro" id="IPR045255">
    <property type="entry name" value="RanBP1-like"/>
</dbReference>
<dbReference type="PANTHER" id="PTHR23138">
    <property type="entry name" value="RAN BINDING PROTEIN"/>
    <property type="match status" value="1"/>
</dbReference>
<dbReference type="PANTHER" id="PTHR23138:SF88">
    <property type="entry name" value="RAN-BINDING PROTEIN 3-LIKE"/>
    <property type="match status" value="1"/>
</dbReference>
<dbReference type="Pfam" id="PF00638">
    <property type="entry name" value="Ran_BP1"/>
    <property type="match status" value="1"/>
</dbReference>
<dbReference type="SMART" id="SM00160">
    <property type="entry name" value="RanBD"/>
    <property type="match status" value="1"/>
</dbReference>
<dbReference type="SUPFAM" id="SSF50729">
    <property type="entry name" value="PH domain-like"/>
    <property type="match status" value="1"/>
</dbReference>
<dbReference type="PROSITE" id="PS50196">
    <property type="entry name" value="RANBD1"/>
    <property type="match status" value="1"/>
</dbReference>
<organism>
    <name type="scientific">Mus musculus</name>
    <name type="common">Mouse</name>
    <dbReference type="NCBI Taxonomy" id="10090"/>
    <lineage>
        <taxon>Eukaryota</taxon>
        <taxon>Metazoa</taxon>
        <taxon>Chordata</taxon>
        <taxon>Craniata</taxon>
        <taxon>Vertebrata</taxon>
        <taxon>Euteleostomi</taxon>
        <taxon>Mammalia</taxon>
        <taxon>Eutheria</taxon>
        <taxon>Euarchontoglires</taxon>
        <taxon>Glires</taxon>
        <taxon>Rodentia</taxon>
        <taxon>Myomorpha</taxon>
        <taxon>Muroidea</taxon>
        <taxon>Muridae</taxon>
        <taxon>Murinae</taxon>
        <taxon>Mus</taxon>
        <taxon>Mus</taxon>
    </lineage>
</organism>
<proteinExistence type="evidence at protein level"/>
<sequence length="491" mass="54492">MSTTQRKDDSHLFTSSCTRQLQVQEDRQQQEKYVIAQPIFVFEKGEHNFKRPAEDSLEETAEPEFTGFLRKRVRSSSVTLHTTDPQSQGVATLSQTRLRSSSFTDVPTFPPCRPVRKNNVFMTSRLLQRSDDMNNVEQGPPMRSSEQVLRPAVLQPSQTQSCQKAGTTFGPGALKSYKTKEKAEHEISEVGSSSSLLSENLPNARSSIQLSTDPCISEAPSGCQPKEDKCSFTSCSSDFVFGENMVERVLGTQKLTQPPLQNLSYAKEKTFKSVLKFPNAVSNSDSIENISLVESAAAFSSKPSQKCLLEKIDVITGEETEHNVLKINCKIFVFNKATESWSERGQGILRLNDTAGRECGTLQSRLIMRNQGSLRLVLNSRLWAQMKIQRASQKNLRITATDLEDDGIKIFLIQASAKDTGFLYAAIHHRLVALRSLAKQGDGGPAESQSDTALPQLNGESCDEDEDEIAQVTKNGSDPSRWSHRQSIVCS</sequence>
<evidence type="ECO:0000250" key="1">
    <source>
        <dbReference type="UniProtKB" id="Q86VV4"/>
    </source>
</evidence>
<evidence type="ECO:0000255" key="2">
    <source>
        <dbReference type="PROSITE-ProRule" id="PRU00164"/>
    </source>
</evidence>
<evidence type="ECO:0000256" key="3">
    <source>
        <dbReference type="SAM" id="MobiDB-lite"/>
    </source>
</evidence>
<evidence type="ECO:0000269" key="4">
    <source>
    </source>
</evidence>
<evidence type="ECO:0000303" key="5">
    <source>
    </source>
</evidence>
<evidence type="ECO:0000305" key="6">
    <source>
    </source>
</evidence>
<gene>
    <name type="primary">Ranbp3l</name>
</gene>
<keyword id="KW-0025">Alternative splicing</keyword>
<keyword id="KW-0963">Cytoplasm</keyword>
<keyword id="KW-0539">Nucleus</keyword>
<keyword id="KW-1185">Reference proteome</keyword>
<name>RNB3L_MOUSE</name>